<evidence type="ECO:0000255" key="1">
    <source>
        <dbReference type="HAMAP-Rule" id="MF_00303"/>
    </source>
</evidence>
<comment type="function">
    <text evidence="1">Involved in protein export. Acts as a chaperone by maintaining the newly synthesized protein in an open conformation. Functions as a peptidyl-prolyl cis-trans isomerase.</text>
</comment>
<comment type="catalytic activity">
    <reaction evidence="1">
        <text>[protein]-peptidylproline (omega=180) = [protein]-peptidylproline (omega=0)</text>
        <dbReference type="Rhea" id="RHEA:16237"/>
        <dbReference type="Rhea" id="RHEA-COMP:10747"/>
        <dbReference type="Rhea" id="RHEA-COMP:10748"/>
        <dbReference type="ChEBI" id="CHEBI:83833"/>
        <dbReference type="ChEBI" id="CHEBI:83834"/>
        <dbReference type="EC" id="5.2.1.8"/>
    </reaction>
</comment>
<comment type="subcellular location">
    <subcellularLocation>
        <location>Cytoplasm</location>
    </subcellularLocation>
    <text evidence="1">About half TF is bound to the ribosome near the polypeptide exit tunnel while the other half is free in the cytoplasm.</text>
</comment>
<comment type="domain">
    <text evidence="1">Consists of 3 domains; the N-terminus binds the ribosome, the middle domain has PPIase activity, while the C-terminus has intrinsic chaperone activity on its own.</text>
</comment>
<comment type="similarity">
    <text evidence="1">Belongs to the FKBP-type PPIase family. Tig subfamily.</text>
</comment>
<feature type="chain" id="PRO_1000022675" description="Trigger factor">
    <location>
        <begin position="1"/>
        <end position="439"/>
    </location>
</feature>
<feature type="domain" description="PPIase FKBP-type" evidence="1">
    <location>
        <begin position="162"/>
        <end position="247"/>
    </location>
</feature>
<dbReference type="EC" id="5.2.1.8" evidence="1"/>
<dbReference type="EMBL" id="CP000513">
    <property type="protein sequence ID" value="ABQ13939.1"/>
    <property type="molecule type" value="Genomic_DNA"/>
</dbReference>
<dbReference type="RefSeq" id="WP_011927976.1">
    <property type="nucleotide sequence ID" value="NC_009446.1"/>
</dbReference>
<dbReference type="SMR" id="A5EWF6"/>
<dbReference type="STRING" id="246195.DNO_0230"/>
<dbReference type="KEGG" id="dno:DNO_0230"/>
<dbReference type="eggNOG" id="COG0544">
    <property type="taxonomic scope" value="Bacteria"/>
</dbReference>
<dbReference type="HOGENOM" id="CLU_033058_2_0_6"/>
<dbReference type="OrthoDB" id="9767721at2"/>
<dbReference type="Proteomes" id="UP000000248">
    <property type="component" value="Chromosome"/>
</dbReference>
<dbReference type="GO" id="GO:0005737">
    <property type="term" value="C:cytoplasm"/>
    <property type="evidence" value="ECO:0007669"/>
    <property type="project" value="UniProtKB-SubCell"/>
</dbReference>
<dbReference type="GO" id="GO:0003755">
    <property type="term" value="F:peptidyl-prolyl cis-trans isomerase activity"/>
    <property type="evidence" value="ECO:0007669"/>
    <property type="project" value="UniProtKB-UniRule"/>
</dbReference>
<dbReference type="GO" id="GO:0044183">
    <property type="term" value="F:protein folding chaperone"/>
    <property type="evidence" value="ECO:0007669"/>
    <property type="project" value="TreeGrafter"/>
</dbReference>
<dbReference type="GO" id="GO:0043022">
    <property type="term" value="F:ribosome binding"/>
    <property type="evidence" value="ECO:0007669"/>
    <property type="project" value="TreeGrafter"/>
</dbReference>
<dbReference type="GO" id="GO:0051083">
    <property type="term" value="P:'de novo' cotranslational protein folding"/>
    <property type="evidence" value="ECO:0007669"/>
    <property type="project" value="TreeGrafter"/>
</dbReference>
<dbReference type="GO" id="GO:0051301">
    <property type="term" value="P:cell division"/>
    <property type="evidence" value="ECO:0007669"/>
    <property type="project" value="UniProtKB-KW"/>
</dbReference>
<dbReference type="GO" id="GO:0061077">
    <property type="term" value="P:chaperone-mediated protein folding"/>
    <property type="evidence" value="ECO:0007669"/>
    <property type="project" value="TreeGrafter"/>
</dbReference>
<dbReference type="GO" id="GO:0015031">
    <property type="term" value="P:protein transport"/>
    <property type="evidence" value="ECO:0007669"/>
    <property type="project" value="UniProtKB-UniRule"/>
</dbReference>
<dbReference type="GO" id="GO:0043335">
    <property type="term" value="P:protein unfolding"/>
    <property type="evidence" value="ECO:0007669"/>
    <property type="project" value="TreeGrafter"/>
</dbReference>
<dbReference type="FunFam" id="3.10.50.40:FF:000001">
    <property type="entry name" value="Trigger factor"/>
    <property type="match status" value="1"/>
</dbReference>
<dbReference type="Gene3D" id="3.10.50.40">
    <property type="match status" value="1"/>
</dbReference>
<dbReference type="Gene3D" id="3.30.70.1050">
    <property type="entry name" value="Trigger factor ribosome-binding domain"/>
    <property type="match status" value="1"/>
</dbReference>
<dbReference type="Gene3D" id="1.10.3120.10">
    <property type="entry name" value="Trigger factor, C-terminal domain"/>
    <property type="match status" value="1"/>
</dbReference>
<dbReference type="HAMAP" id="MF_00303">
    <property type="entry name" value="Trigger_factor_Tig"/>
    <property type="match status" value="1"/>
</dbReference>
<dbReference type="InterPro" id="IPR046357">
    <property type="entry name" value="PPIase_dom_sf"/>
</dbReference>
<dbReference type="InterPro" id="IPR001179">
    <property type="entry name" value="PPIase_FKBP_dom"/>
</dbReference>
<dbReference type="InterPro" id="IPR005215">
    <property type="entry name" value="Trig_fac"/>
</dbReference>
<dbReference type="InterPro" id="IPR008880">
    <property type="entry name" value="Trigger_fac_C"/>
</dbReference>
<dbReference type="InterPro" id="IPR037041">
    <property type="entry name" value="Trigger_fac_C_sf"/>
</dbReference>
<dbReference type="InterPro" id="IPR008881">
    <property type="entry name" value="Trigger_fac_ribosome-bd_bac"/>
</dbReference>
<dbReference type="InterPro" id="IPR036611">
    <property type="entry name" value="Trigger_fac_ribosome-bd_sf"/>
</dbReference>
<dbReference type="InterPro" id="IPR027304">
    <property type="entry name" value="Trigger_fact/SurA_dom_sf"/>
</dbReference>
<dbReference type="NCBIfam" id="TIGR00115">
    <property type="entry name" value="tig"/>
    <property type="match status" value="1"/>
</dbReference>
<dbReference type="PANTHER" id="PTHR30560">
    <property type="entry name" value="TRIGGER FACTOR CHAPERONE AND PEPTIDYL-PROLYL CIS/TRANS ISOMERASE"/>
    <property type="match status" value="1"/>
</dbReference>
<dbReference type="PANTHER" id="PTHR30560:SF3">
    <property type="entry name" value="TRIGGER FACTOR-LIKE PROTEIN TIG, CHLOROPLASTIC"/>
    <property type="match status" value="1"/>
</dbReference>
<dbReference type="Pfam" id="PF00254">
    <property type="entry name" value="FKBP_C"/>
    <property type="match status" value="1"/>
</dbReference>
<dbReference type="Pfam" id="PF05698">
    <property type="entry name" value="Trigger_C"/>
    <property type="match status" value="1"/>
</dbReference>
<dbReference type="Pfam" id="PF05697">
    <property type="entry name" value="Trigger_N"/>
    <property type="match status" value="1"/>
</dbReference>
<dbReference type="PIRSF" id="PIRSF003095">
    <property type="entry name" value="Trigger_factor"/>
    <property type="match status" value="1"/>
</dbReference>
<dbReference type="SUPFAM" id="SSF54534">
    <property type="entry name" value="FKBP-like"/>
    <property type="match status" value="1"/>
</dbReference>
<dbReference type="SUPFAM" id="SSF109998">
    <property type="entry name" value="Triger factor/SurA peptide-binding domain-like"/>
    <property type="match status" value="1"/>
</dbReference>
<dbReference type="SUPFAM" id="SSF102735">
    <property type="entry name" value="Trigger factor ribosome-binding domain"/>
    <property type="match status" value="1"/>
</dbReference>
<dbReference type="PROSITE" id="PS50059">
    <property type="entry name" value="FKBP_PPIASE"/>
    <property type="match status" value="1"/>
</dbReference>
<sequence length="439" mass="50043">MESSIEKLEGLAHKLTVEIPAGDIDQAVTQRLKSLRPRLRIDGFRPGKVPPHIIKQRYGISARQDVLGDEIDRSYREIISKSDYAPVAPPQIELISGFKEGEALKFEAIFEVMPEVVVNGLDALDITLPDAQLSDKDVDEMIDTLRRQRANFVESDKIAGNGDRLTLDFIGTLNGEPFEGGKGEDFCFNLGSGQMLPDFERGLQGMKAGEEKSFDVQFPEDYPSENLAGKTAQFAATLKKVEAMILPEVDESFIKAFGIASGDAADFRRAIRDNMSRELEKAKRRIKRERLFDAILEKNADQIVPNASLHQEMERMAKEFNLEKQIPDTEKRHQLMHQLFEKNAKRRIQLGLLLGKLFDERQIEIDQSRVQERLESIAATYEDPEEVKKWYQNDEKSRRDLEAVILEEQLIDQLYEKAKVSYETRSFQEIMAVNAQIHG</sequence>
<proteinExistence type="inferred from homology"/>
<name>TIG_DICNV</name>
<keyword id="KW-0131">Cell cycle</keyword>
<keyword id="KW-0132">Cell division</keyword>
<keyword id="KW-0143">Chaperone</keyword>
<keyword id="KW-0963">Cytoplasm</keyword>
<keyword id="KW-0413">Isomerase</keyword>
<keyword id="KW-1185">Reference proteome</keyword>
<keyword id="KW-0697">Rotamase</keyword>
<gene>
    <name evidence="1" type="primary">tig</name>
    <name type="ordered locus">DNO_0230</name>
</gene>
<reference key="1">
    <citation type="journal article" date="2007" name="Nat. Biotechnol.">
        <title>Genome sequence and identification of candidate vaccine antigens from the animal pathogen Dichelobacter nodosus.</title>
        <authorList>
            <person name="Myers G.S.A."/>
            <person name="Parker D."/>
            <person name="Al-Hasani K."/>
            <person name="Kennan R.M."/>
            <person name="Seemann T."/>
            <person name="Ren Q."/>
            <person name="Badger J.H."/>
            <person name="Selengut J.D."/>
            <person name="Deboy R.T."/>
            <person name="Tettelin H."/>
            <person name="Boyce J.D."/>
            <person name="McCarl V.P."/>
            <person name="Han X."/>
            <person name="Nelson W.C."/>
            <person name="Madupu R."/>
            <person name="Mohamoud Y."/>
            <person name="Holley T."/>
            <person name="Fedorova N."/>
            <person name="Khouri H."/>
            <person name="Bottomley S.P."/>
            <person name="Whittington R.J."/>
            <person name="Adler B."/>
            <person name="Songer J.G."/>
            <person name="Rood J.I."/>
            <person name="Paulsen I.T."/>
        </authorList>
    </citation>
    <scope>NUCLEOTIDE SEQUENCE [LARGE SCALE GENOMIC DNA]</scope>
    <source>
        <strain>VCS1703A</strain>
    </source>
</reference>
<organism>
    <name type="scientific">Dichelobacter nodosus (strain VCS1703A)</name>
    <dbReference type="NCBI Taxonomy" id="246195"/>
    <lineage>
        <taxon>Bacteria</taxon>
        <taxon>Pseudomonadati</taxon>
        <taxon>Pseudomonadota</taxon>
        <taxon>Gammaproteobacteria</taxon>
        <taxon>Cardiobacteriales</taxon>
        <taxon>Cardiobacteriaceae</taxon>
        <taxon>Dichelobacter</taxon>
    </lineage>
</organism>
<accession>A5EWF6</accession>
<protein>
    <recommendedName>
        <fullName evidence="1">Trigger factor</fullName>
        <shortName evidence="1">TF</shortName>
        <ecNumber evidence="1">5.2.1.8</ecNumber>
    </recommendedName>
    <alternativeName>
        <fullName evidence="1">PPIase</fullName>
    </alternativeName>
</protein>